<accession>Q2KTS9</accession>
<keyword id="KW-0028">Amino-acid biosynthesis</keyword>
<keyword id="KW-0067">ATP-binding</keyword>
<keyword id="KW-0963">Cytoplasm</keyword>
<keyword id="KW-0368">Histidine biosynthesis</keyword>
<keyword id="KW-0378">Hydrolase</keyword>
<keyword id="KW-0547">Nucleotide-binding</keyword>
<keyword id="KW-1185">Reference proteome</keyword>
<evidence type="ECO:0000255" key="1">
    <source>
        <dbReference type="HAMAP-Rule" id="MF_01020"/>
    </source>
</evidence>
<reference key="1">
    <citation type="journal article" date="2006" name="J. Bacteriol.">
        <title>Comparison of the genome sequence of the poultry pathogen Bordetella avium with those of B. bronchiseptica, B. pertussis, and B. parapertussis reveals extensive diversity in surface structures associated with host interaction.</title>
        <authorList>
            <person name="Sebaihia M."/>
            <person name="Preston A."/>
            <person name="Maskell D.J."/>
            <person name="Kuzmiak H."/>
            <person name="Connell T.D."/>
            <person name="King N.D."/>
            <person name="Orndorff P.E."/>
            <person name="Miyamoto D.M."/>
            <person name="Thomson N.R."/>
            <person name="Harris D."/>
            <person name="Goble A."/>
            <person name="Lord A."/>
            <person name="Murphy L."/>
            <person name="Quail M.A."/>
            <person name="Rutter S."/>
            <person name="Squares R."/>
            <person name="Squares S."/>
            <person name="Woodward J."/>
            <person name="Parkhill J."/>
            <person name="Temple L.M."/>
        </authorList>
    </citation>
    <scope>NUCLEOTIDE SEQUENCE [LARGE SCALE GENOMIC DNA]</scope>
    <source>
        <strain>197N</strain>
    </source>
</reference>
<sequence>MTNAPVFGADVLARVADTLETRLPQNGGDPQTSYAAKLLAKGPDAFLKKIGEEATELVMAAKDGRPERIVSETADLWFHCLVTLAHYNLRPEDVLAELARREGLSGLEEKARRPAD</sequence>
<protein>
    <recommendedName>
        <fullName evidence="1">Phosphoribosyl-ATP pyrophosphatase</fullName>
        <shortName evidence="1">PRA-PH</shortName>
        <ecNumber evidence="1">3.6.1.31</ecNumber>
    </recommendedName>
</protein>
<feature type="chain" id="PRO_0000319642" description="Phosphoribosyl-ATP pyrophosphatase">
    <location>
        <begin position="1"/>
        <end position="116"/>
    </location>
</feature>
<comment type="catalytic activity">
    <reaction evidence="1">
        <text>1-(5-phospho-beta-D-ribosyl)-ATP + H2O = 1-(5-phospho-beta-D-ribosyl)-5'-AMP + diphosphate + H(+)</text>
        <dbReference type="Rhea" id="RHEA:22828"/>
        <dbReference type="ChEBI" id="CHEBI:15377"/>
        <dbReference type="ChEBI" id="CHEBI:15378"/>
        <dbReference type="ChEBI" id="CHEBI:33019"/>
        <dbReference type="ChEBI" id="CHEBI:59457"/>
        <dbReference type="ChEBI" id="CHEBI:73183"/>
        <dbReference type="EC" id="3.6.1.31"/>
    </reaction>
</comment>
<comment type="pathway">
    <text evidence="1">Amino-acid biosynthesis; L-histidine biosynthesis; L-histidine from 5-phospho-alpha-D-ribose 1-diphosphate: step 2/9.</text>
</comment>
<comment type="subcellular location">
    <subcellularLocation>
        <location evidence="1">Cytoplasm</location>
    </subcellularLocation>
</comment>
<comment type="similarity">
    <text evidence="1">Belongs to the PRA-PH family.</text>
</comment>
<organism>
    <name type="scientific">Bordetella avium (strain 197N)</name>
    <dbReference type="NCBI Taxonomy" id="360910"/>
    <lineage>
        <taxon>Bacteria</taxon>
        <taxon>Pseudomonadati</taxon>
        <taxon>Pseudomonadota</taxon>
        <taxon>Betaproteobacteria</taxon>
        <taxon>Burkholderiales</taxon>
        <taxon>Alcaligenaceae</taxon>
        <taxon>Bordetella</taxon>
    </lineage>
</organism>
<dbReference type="EC" id="3.6.1.31" evidence="1"/>
<dbReference type="EMBL" id="AM167904">
    <property type="protein sequence ID" value="CAJ50931.1"/>
    <property type="molecule type" value="Genomic_DNA"/>
</dbReference>
<dbReference type="RefSeq" id="WP_012418958.1">
    <property type="nucleotide sequence ID" value="NC_010645.1"/>
</dbReference>
<dbReference type="SMR" id="Q2KTS9"/>
<dbReference type="STRING" id="360910.BAV3321"/>
<dbReference type="KEGG" id="bav:BAV3321"/>
<dbReference type="eggNOG" id="COG0140">
    <property type="taxonomic scope" value="Bacteria"/>
</dbReference>
<dbReference type="HOGENOM" id="CLU_123337_1_2_4"/>
<dbReference type="OrthoDB" id="9814738at2"/>
<dbReference type="UniPathway" id="UPA00031">
    <property type="reaction ID" value="UER00007"/>
</dbReference>
<dbReference type="Proteomes" id="UP000001977">
    <property type="component" value="Chromosome"/>
</dbReference>
<dbReference type="GO" id="GO:0005737">
    <property type="term" value="C:cytoplasm"/>
    <property type="evidence" value="ECO:0007669"/>
    <property type="project" value="UniProtKB-SubCell"/>
</dbReference>
<dbReference type="GO" id="GO:0005524">
    <property type="term" value="F:ATP binding"/>
    <property type="evidence" value="ECO:0007669"/>
    <property type="project" value="UniProtKB-KW"/>
</dbReference>
<dbReference type="GO" id="GO:0004636">
    <property type="term" value="F:phosphoribosyl-ATP diphosphatase activity"/>
    <property type="evidence" value="ECO:0007669"/>
    <property type="project" value="UniProtKB-UniRule"/>
</dbReference>
<dbReference type="GO" id="GO:0000105">
    <property type="term" value="P:L-histidine biosynthetic process"/>
    <property type="evidence" value="ECO:0007669"/>
    <property type="project" value="UniProtKB-UniRule"/>
</dbReference>
<dbReference type="CDD" id="cd11534">
    <property type="entry name" value="NTP-PPase_HisIE_like"/>
    <property type="match status" value="1"/>
</dbReference>
<dbReference type="Gene3D" id="1.10.287.1080">
    <property type="entry name" value="MazG-like"/>
    <property type="match status" value="1"/>
</dbReference>
<dbReference type="HAMAP" id="MF_01020">
    <property type="entry name" value="HisE"/>
    <property type="match status" value="1"/>
</dbReference>
<dbReference type="InterPro" id="IPR008179">
    <property type="entry name" value="HisE"/>
</dbReference>
<dbReference type="InterPro" id="IPR021130">
    <property type="entry name" value="PRib-ATP_PPHydrolase-like"/>
</dbReference>
<dbReference type="NCBIfam" id="TIGR03188">
    <property type="entry name" value="histidine_hisI"/>
    <property type="match status" value="1"/>
</dbReference>
<dbReference type="NCBIfam" id="NF001611">
    <property type="entry name" value="PRK00400.1-3"/>
    <property type="match status" value="1"/>
</dbReference>
<dbReference type="PANTHER" id="PTHR42945">
    <property type="entry name" value="HISTIDINE BIOSYNTHESIS BIFUNCTIONAL PROTEIN"/>
    <property type="match status" value="1"/>
</dbReference>
<dbReference type="PANTHER" id="PTHR42945:SF9">
    <property type="entry name" value="HISTIDINE BIOSYNTHESIS BIFUNCTIONAL PROTEIN HISIE"/>
    <property type="match status" value="1"/>
</dbReference>
<dbReference type="Pfam" id="PF01503">
    <property type="entry name" value="PRA-PH"/>
    <property type="match status" value="1"/>
</dbReference>
<dbReference type="SUPFAM" id="SSF101386">
    <property type="entry name" value="all-alpha NTP pyrophosphatases"/>
    <property type="match status" value="1"/>
</dbReference>
<proteinExistence type="inferred from homology"/>
<name>HIS2_BORA1</name>
<gene>
    <name evidence="1" type="primary">hisE</name>
    <name type="ordered locus">BAV3321</name>
</gene>